<feature type="chain" id="PRO_0000313131" description="DNA ligase">
    <location>
        <begin position="1"/>
        <end position="665"/>
    </location>
</feature>
<feature type="domain" description="BRCT" evidence="1">
    <location>
        <begin position="587"/>
        <end position="665"/>
    </location>
</feature>
<feature type="active site" description="N6-AMP-lysine intermediate" evidence="1">
    <location>
        <position position="112"/>
    </location>
</feature>
<feature type="binding site" evidence="1">
    <location>
        <begin position="31"/>
        <end position="35"/>
    </location>
    <ligand>
        <name>NAD(+)</name>
        <dbReference type="ChEBI" id="CHEBI:57540"/>
    </ligand>
</feature>
<feature type="binding site" evidence="1">
    <location>
        <begin position="80"/>
        <end position="81"/>
    </location>
    <ligand>
        <name>NAD(+)</name>
        <dbReference type="ChEBI" id="CHEBI:57540"/>
    </ligand>
</feature>
<feature type="binding site" evidence="1">
    <location>
        <position position="110"/>
    </location>
    <ligand>
        <name>NAD(+)</name>
        <dbReference type="ChEBI" id="CHEBI:57540"/>
    </ligand>
</feature>
<feature type="binding site" evidence="1">
    <location>
        <position position="133"/>
    </location>
    <ligand>
        <name>NAD(+)</name>
        <dbReference type="ChEBI" id="CHEBI:57540"/>
    </ligand>
</feature>
<feature type="binding site" evidence="1">
    <location>
        <position position="170"/>
    </location>
    <ligand>
        <name>NAD(+)</name>
        <dbReference type="ChEBI" id="CHEBI:57540"/>
    </ligand>
</feature>
<feature type="binding site" evidence="1">
    <location>
        <position position="285"/>
    </location>
    <ligand>
        <name>NAD(+)</name>
        <dbReference type="ChEBI" id="CHEBI:57540"/>
    </ligand>
</feature>
<feature type="binding site" evidence="1">
    <location>
        <position position="309"/>
    </location>
    <ligand>
        <name>NAD(+)</name>
        <dbReference type="ChEBI" id="CHEBI:57540"/>
    </ligand>
</feature>
<feature type="binding site" evidence="1">
    <location>
        <position position="403"/>
    </location>
    <ligand>
        <name>Zn(2+)</name>
        <dbReference type="ChEBI" id="CHEBI:29105"/>
    </ligand>
</feature>
<feature type="binding site" evidence="1">
    <location>
        <position position="406"/>
    </location>
    <ligand>
        <name>Zn(2+)</name>
        <dbReference type="ChEBI" id="CHEBI:29105"/>
    </ligand>
</feature>
<feature type="binding site" evidence="1">
    <location>
        <position position="421"/>
    </location>
    <ligand>
        <name>Zn(2+)</name>
        <dbReference type="ChEBI" id="CHEBI:29105"/>
    </ligand>
</feature>
<feature type="binding site" evidence="1">
    <location>
        <position position="427"/>
    </location>
    <ligand>
        <name>Zn(2+)</name>
        <dbReference type="ChEBI" id="CHEBI:29105"/>
    </ligand>
</feature>
<keyword id="KW-0227">DNA damage</keyword>
<keyword id="KW-0234">DNA repair</keyword>
<keyword id="KW-0235">DNA replication</keyword>
<keyword id="KW-0436">Ligase</keyword>
<keyword id="KW-0460">Magnesium</keyword>
<keyword id="KW-0464">Manganese</keyword>
<keyword id="KW-0479">Metal-binding</keyword>
<keyword id="KW-0520">NAD</keyword>
<keyword id="KW-0862">Zinc</keyword>
<organism>
    <name type="scientific">Bacteroides fragilis (strain ATCC 25285 / DSM 2151 / CCUG 4856 / JCM 11019 / LMG 10263 / NCTC 9343 / Onslow / VPI 2553 / EN-2)</name>
    <dbReference type="NCBI Taxonomy" id="272559"/>
    <lineage>
        <taxon>Bacteria</taxon>
        <taxon>Pseudomonadati</taxon>
        <taxon>Bacteroidota</taxon>
        <taxon>Bacteroidia</taxon>
        <taxon>Bacteroidales</taxon>
        <taxon>Bacteroidaceae</taxon>
        <taxon>Bacteroides</taxon>
    </lineage>
</organism>
<proteinExistence type="inferred from homology"/>
<evidence type="ECO:0000255" key="1">
    <source>
        <dbReference type="HAMAP-Rule" id="MF_01588"/>
    </source>
</evidence>
<comment type="function">
    <text evidence="1">DNA ligase that catalyzes the formation of phosphodiester linkages between 5'-phosphoryl and 3'-hydroxyl groups in double-stranded DNA using NAD as a coenzyme and as the energy source for the reaction. It is essential for DNA replication and repair of damaged DNA.</text>
</comment>
<comment type="catalytic activity">
    <reaction evidence="1">
        <text>NAD(+) + (deoxyribonucleotide)n-3'-hydroxyl + 5'-phospho-(deoxyribonucleotide)m = (deoxyribonucleotide)n+m + AMP + beta-nicotinamide D-nucleotide.</text>
        <dbReference type="EC" id="6.5.1.2"/>
    </reaction>
</comment>
<comment type="cofactor">
    <cofactor evidence="1">
        <name>Mg(2+)</name>
        <dbReference type="ChEBI" id="CHEBI:18420"/>
    </cofactor>
    <cofactor evidence="1">
        <name>Mn(2+)</name>
        <dbReference type="ChEBI" id="CHEBI:29035"/>
    </cofactor>
</comment>
<comment type="similarity">
    <text evidence="1">Belongs to the NAD-dependent DNA ligase family. LigA subfamily.</text>
</comment>
<protein>
    <recommendedName>
        <fullName evidence="1">DNA ligase</fullName>
        <ecNumber evidence="1">6.5.1.2</ecNumber>
    </recommendedName>
    <alternativeName>
        <fullName evidence="1">Polydeoxyribonucleotide synthase [NAD(+)]</fullName>
    </alternativeName>
</protein>
<name>DNLJ_BACFN</name>
<accession>Q5LCI0</accession>
<sequence length="665" mass="75329">MTVKEKIEQLRLQLHQHNYNYYVLNAPEISDKEFDDLMRELQDLEQEHPEYKDENSPTMRVGSDINKNFTQVAHKYPMLSLSNTYSENEVTDFYDRVRKALNEDFEICCEMKYDGTSISLTYENGKLIRAVTRGDGEKGDDVTDNVKTIRSIPLVLHGDNYPEVFEIRGEILMPWEVFEALNREKEAREEPLFANPRNAASGTLKLQNSAIVASRKLDAYLYYLLGDNLPTDGHYENLQEAAKWGFKISPLMRKCQTLQEVFDFINYWDVERKNLNVATDGIVLKVNSLKQQRNLGFTAKSPRWAIAYKFQAERALTRLNMVTYQVGRTGAVTPVANLDPVQLSGTVVKRASLHNADIIEGLDLHIGDMVYVEKGGEIIPKITGVDTSVRFMIGEKVKFITHCPECGSKLIRYEGEAAHYCPNETACPPQIKGKIEHFISRKAMNIDGLGPETVDMFYRLGLIHDTADLYQLTTDDIRGLDRMGDKSAENIIKGIMQSKEVPFERVIFALGIRFVGETVAKKIAKSFKDIEELENADLETLINIDEIGEKIARSILNYFANESNRKLVDRLKTAGLQLYRPEEDLSGHTDKLAGQSIVISGVFTHHSRDEYKDLIEKHGGKNVGSISSKTSFILAGDNMGPAKLEKASKLGIKIMNEEEFLKLIS</sequence>
<reference key="1">
    <citation type="journal article" date="2005" name="Science">
        <title>Extensive DNA inversions in the B. fragilis genome control variable gene expression.</title>
        <authorList>
            <person name="Cerdeno-Tarraga A.-M."/>
            <person name="Patrick S."/>
            <person name="Crossman L.C."/>
            <person name="Blakely G."/>
            <person name="Abratt V."/>
            <person name="Lennard N."/>
            <person name="Poxton I."/>
            <person name="Duerden B."/>
            <person name="Harris B."/>
            <person name="Quail M.A."/>
            <person name="Barron A."/>
            <person name="Clark L."/>
            <person name="Corton C."/>
            <person name="Doggett J."/>
            <person name="Holden M.T.G."/>
            <person name="Larke N."/>
            <person name="Line A."/>
            <person name="Lord A."/>
            <person name="Norbertczak H."/>
            <person name="Ormond D."/>
            <person name="Price C."/>
            <person name="Rabbinowitsch E."/>
            <person name="Woodward J."/>
            <person name="Barrell B.G."/>
            <person name="Parkhill J."/>
        </authorList>
    </citation>
    <scope>NUCLEOTIDE SEQUENCE [LARGE SCALE GENOMIC DNA]</scope>
    <source>
        <strain>ATCC 25285 / DSM 2151 / CCUG 4856 / JCM 11019 / LMG 10263 / NCTC 9343 / Onslow / VPI 2553 / EN-2</strain>
    </source>
</reference>
<dbReference type="EC" id="6.5.1.2" evidence="1"/>
<dbReference type="EMBL" id="CR626927">
    <property type="protein sequence ID" value="CAH08185.1"/>
    <property type="molecule type" value="Genomic_DNA"/>
</dbReference>
<dbReference type="RefSeq" id="WP_005787866.1">
    <property type="nucleotide sequence ID" value="NZ_UFTH01000001.1"/>
</dbReference>
<dbReference type="SMR" id="Q5LCI0"/>
<dbReference type="PaxDb" id="272559-BF9343_2404"/>
<dbReference type="GeneID" id="60366234"/>
<dbReference type="KEGG" id="bfs:BF9343_2404"/>
<dbReference type="eggNOG" id="COG0272">
    <property type="taxonomic scope" value="Bacteria"/>
</dbReference>
<dbReference type="HOGENOM" id="CLU_007764_2_0_10"/>
<dbReference type="Proteomes" id="UP000006731">
    <property type="component" value="Chromosome"/>
</dbReference>
<dbReference type="GO" id="GO:0005829">
    <property type="term" value="C:cytosol"/>
    <property type="evidence" value="ECO:0007669"/>
    <property type="project" value="TreeGrafter"/>
</dbReference>
<dbReference type="GO" id="GO:0003677">
    <property type="term" value="F:DNA binding"/>
    <property type="evidence" value="ECO:0007669"/>
    <property type="project" value="InterPro"/>
</dbReference>
<dbReference type="GO" id="GO:0003911">
    <property type="term" value="F:DNA ligase (NAD+) activity"/>
    <property type="evidence" value="ECO:0007669"/>
    <property type="project" value="UniProtKB-UniRule"/>
</dbReference>
<dbReference type="GO" id="GO:0046872">
    <property type="term" value="F:metal ion binding"/>
    <property type="evidence" value="ECO:0007669"/>
    <property type="project" value="UniProtKB-KW"/>
</dbReference>
<dbReference type="GO" id="GO:0006281">
    <property type="term" value="P:DNA repair"/>
    <property type="evidence" value="ECO:0007669"/>
    <property type="project" value="UniProtKB-KW"/>
</dbReference>
<dbReference type="GO" id="GO:0006260">
    <property type="term" value="P:DNA replication"/>
    <property type="evidence" value="ECO:0007669"/>
    <property type="project" value="UniProtKB-KW"/>
</dbReference>
<dbReference type="CDD" id="cd00114">
    <property type="entry name" value="LIGANc"/>
    <property type="match status" value="1"/>
</dbReference>
<dbReference type="FunFam" id="1.10.150.20:FF:000006">
    <property type="entry name" value="DNA ligase"/>
    <property type="match status" value="1"/>
</dbReference>
<dbReference type="FunFam" id="1.10.150.20:FF:000007">
    <property type="entry name" value="DNA ligase"/>
    <property type="match status" value="1"/>
</dbReference>
<dbReference type="FunFam" id="1.10.287.610:FF:000002">
    <property type="entry name" value="DNA ligase"/>
    <property type="match status" value="1"/>
</dbReference>
<dbReference type="FunFam" id="2.40.50.140:FF:000012">
    <property type="entry name" value="DNA ligase"/>
    <property type="match status" value="1"/>
</dbReference>
<dbReference type="FunFam" id="3.30.470.30:FF:000001">
    <property type="entry name" value="DNA ligase"/>
    <property type="match status" value="1"/>
</dbReference>
<dbReference type="FunFam" id="6.20.10.30:FF:000005">
    <property type="entry name" value="DNA ligase"/>
    <property type="match status" value="1"/>
</dbReference>
<dbReference type="Gene3D" id="6.20.10.30">
    <property type="match status" value="1"/>
</dbReference>
<dbReference type="Gene3D" id="1.10.150.20">
    <property type="entry name" value="5' to 3' exonuclease, C-terminal subdomain"/>
    <property type="match status" value="2"/>
</dbReference>
<dbReference type="Gene3D" id="3.40.50.10190">
    <property type="entry name" value="BRCT domain"/>
    <property type="match status" value="1"/>
</dbReference>
<dbReference type="Gene3D" id="3.30.470.30">
    <property type="entry name" value="DNA ligase/mRNA capping enzyme"/>
    <property type="match status" value="1"/>
</dbReference>
<dbReference type="Gene3D" id="1.10.287.610">
    <property type="entry name" value="Helix hairpin bin"/>
    <property type="match status" value="1"/>
</dbReference>
<dbReference type="Gene3D" id="2.40.50.140">
    <property type="entry name" value="Nucleic acid-binding proteins"/>
    <property type="match status" value="1"/>
</dbReference>
<dbReference type="HAMAP" id="MF_01588">
    <property type="entry name" value="DNA_ligase_A"/>
    <property type="match status" value="1"/>
</dbReference>
<dbReference type="InterPro" id="IPR001357">
    <property type="entry name" value="BRCT_dom"/>
</dbReference>
<dbReference type="InterPro" id="IPR036420">
    <property type="entry name" value="BRCT_dom_sf"/>
</dbReference>
<dbReference type="InterPro" id="IPR041663">
    <property type="entry name" value="DisA/LigA_HHH"/>
</dbReference>
<dbReference type="InterPro" id="IPR001679">
    <property type="entry name" value="DNA_ligase"/>
</dbReference>
<dbReference type="InterPro" id="IPR033136">
    <property type="entry name" value="DNA_ligase_CS"/>
</dbReference>
<dbReference type="InterPro" id="IPR013839">
    <property type="entry name" value="DNAligase_adenylation"/>
</dbReference>
<dbReference type="InterPro" id="IPR013840">
    <property type="entry name" value="DNAligase_N"/>
</dbReference>
<dbReference type="InterPro" id="IPR003583">
    <property type="entry name" value="Hlx-hairpin-Hlx_DNA-bd_motif"/>
</dbReference>
<dbReference type="InterPro" id="IPR012340">
    <property type="entry name" value="NA-bd_OB-fold"/>
</dbReference>
<dbReference type="InterPro" id="IPR004150">
    <property type="entry name" value="NAD_DNA_ligase_OB"/>
</dbReference>
<dbReference type="InterPro" id="IPR010994">
    <property type="entry name" value="RuvA_2-like"/>
</dbReference>
<dbReference type="InterPro" id="IPR004149">
    <property type="entry name" value="Znf_DNAligase_C4"/>
</dbReference>
<dbReference type="NCBIfam" id="TIGR00575">
    <property type="entry name" value="dnlj"/>
    <property type="match status" value="1"/>
</dbReference>
<dbReference type="NCBIfam" id="NF005932">
    <property type="entry name" value="PRK07956.1"/>
    <property type="match status" value="1"/>
</dbReference>
<dbReference type="PANTHER" id="PTHR23389">
    <property type="entry name" value="CHROMOSOME TRANSMISSION FIDELITY FACTOR 18"/>
    <property type="match status" value="1"/>
</dbReference>
<dbReference type="PANTHER" id="PTHR23389:SF9">
    <property type="entry name" value="DNA LIGASE"/>
    <property type="match status" value="1"/>
</dbReference>
<dbReference type="Pfam" id="PF00533">
    <property type="entry name" value="BRCT"/>
    <property type="match status" value="1"/>
</dbReference>
<dbReference type="Pfam" id="PF01653">
    <property type="entry name" value="DNA_ligase_aden"/>
    <property type="match status" value="1"/>
</dbReference>
<dbReference type="Pfam" id="PF03120">
    <property type="entry name" value="DNA_ligase_OB"/>
    <property type="match status" value="1"/>
</dbReference>
<dbReference type="Pfam" id="PF03119">
    <property type="entry name" value="DNA_ligase_ZBD"/>
    <property type="match status" value="1"/>
</dbReference>
<dbReference type="Pfam" id="PF12826">
    <property type="entry name" value="HHH_2"/>
    <property type="match status" value="1"/>
</dbReference>
<dbReference type="Pfam" id="PF14520">
    <property type="entry name" value="HHH_5"/>
    <property type="match status" value="1"/>
</dbReference>
<dbReference type="Pfam" id="PF22745">
    <property type="entry name" value="Nlig-Ia"/>
    <property type="match status" value="1"/>
</dbReference>
<dbReference type="PIRSF" id="PIRSF001604">
    <property type="entry name" value="LigA"/>
    <property type="match status" value="1"/>
</dbReference>
<dbReference type="SMART" id="SM00292">
    <property type="entry name" value="BRCT"/>
    <property type="match status" value="1"/>
</dbReference>
<dbReference type="SMART" id="SM00278">
    <property type="entry name" value="HhH1"/>
    <property type="match status" value="4"/>
</dbReference>
<dbReference type="SMART" id="SM00532">
    <property type="entry name" value="LIGANc"/>
    <property type="match status" value="1"/>
</dbReference>
<dbReference type="SUPFAM" id="SSF52113">
    <property type="entry name" value="BRCT domain"/>
    <property type="match status" value="1"/>
</dbReference>
<dbReference type="SUPFAM" id="SSF56091">
    <property type="entry name" value="DNA ligase/mRNA capping enzyme, catalytic domain"/>
    <property type="match status" value="1"/>
</dbReference>
<dbReference type="SUPFAM" id="SSF50249">
    <property type="entry name" value="Nucleic acid-binding proteins"/>
    <property type="match status" value="1"/>
</dbReference>
<dbReference type="SUPFAM" id="SSF47781">
    <property type="entry name" value="RuvA domain 2-like"/>
    <property type="match status" value="1"/>
</dbReference>
<dbReference type="PROSITE" id="PS50172">
    <property type="entry name" value="BRCT"/>
    <property type="match status" value="1"/>
</dbReference>
<dbReference type="PROSITE" id="PS01056">
    <property type="entry name" value="DNA_LIGASE_N2"/>
    <property type="match status" value="1"/>
</dbReference>
<gene>
    <name evidence="1" type="primary">ligA</name>
    <name type="ordered locus">BF2485</name>
</gene>